<sequence length="204" mass="19598">MDSKKAILMLSLLAMALISSVMSARDLTETSTDAKKEVVEKTNEVNDAKYGGGYNHGGGYNGGGYNHGGGYNHGGGGYHNGGGGYNHGGGGYNGGGGHGGHGGGGYNGGGGHGGHGGGGYNGGGGHGGHGGAESVAVQTEEKTNEVNDAKYGGGSNYNDGRGGYNHGGGGYNHGGGGHGGHGGHGGHGGHGGHGAVQTEDNTQN</sequence>
<keyword id="KW-0677">Repeat</keyword>
<keyword id="KW-0346">Stress response</keyword>
<proteinExistence type="evidence at transcript level"/>
<dbReference type="EMBL" id="L03708">
    <property type="protein sequence ID" value="AAA99833.1"/>
    <property type="molecule type" value="mRNA"/>
</dbReference>
<dbReference type="PIR" id="T09592">
    <property type="entry name" value="T09592"/>
</dbReference>
<dbReference type="InterPro" id="IPR052872">
    <property type="entry name" value="ESR_Regulator"/>
</dbReference>
<dbReference type="InterPro" id="IPR010800">
    <property type="entry name" value="GRP"/>
</dbReference>
<dbReference type="PANTHER" id="PTHR37372:SF1">
    <property type="entry name" value="GEO07177P1"/>
    <property type="match status" value="1"/>
</dbReference>
<dbReference type="PANTHER" id="PTHR37372">
    <property type="entry name" value="OS06G0316800 PROTEIN"/>
    <property type="match status" value="1"/>
</dbReference>
<dbReference type="Pfam" id="PF07172">
    <property type="entry name" value="GRP"/>
    <property type="match status" value="1"/>
</dbReference>
<dbReference type="PRINTS" id="PR01228">
    <property type="entry name" value="EGGSHELL"/>
</dbReference>
<reference key="1">
    <citation type="journal article" date="1993" name="Plant Physiol.">
        <title>New cold- and drought-regulated gene from Medicago sativa.</title>
        <authorList>
            <person name="Laberge S."/>
            <person name="Castonguay Y."/>
            <person name="Vezina L.-P."/>
        </authorList>
    </citation>
    <scope>NUCLEOTIDE SEQUENCE [MRNA]</scope>
    <source>
        <strain>cv. Apica</strain>
    </source>
</reference>
<gene>
    <name type="primary">CORA</name>
</gene>
<accession>Q07202</accession>
<feature type="chain" id="PRO_0000079255" description="Cold and drought-regulated protein CORA">
    <location>
        <begin position="1"/>
        <end position="204"/>
    </location>
</feature>
<feature type="repeat" description="1-1">
    <location>
        <begin position="54"/>
        <end position="59"/>
    </location>
</feature>
<feature type="repeat" description="1-2">
    <location>
        <begin position="65"/>
        <end position="70"/>
    </location>
</feature>
<feature type="repeat" description="1-3">
    <location>
        <begin position="71"/>
        <end position="76"/>
    </location>
</feature>
<feature type="repeat" description="1-4">
    <location>
        <begin position="78"/>
        <end position="83"/>
    </location>
</feature>
<feature type="repeat" description="1-5">
    <location>
        <begin position="85"/>
        <end position="90"/>
    </location>
</feature>
<feature type="repeat" description="2-1">
    <location>
        <begin position="98"/>
        <end position="100"/>
    </location>
</feature>
<feature type="repeat" description="2-2">
    <location>
        <begin position="101"/>
        <end position="103"/>
    </location>
</feature>
<feature type="repeat" description="2-3">
    <location>
        <begin position="112"/>
        <end position="114"/>
    </location>
</feature>
<feature type="repeat" description="2-4">
    <location>
        <begin position="115"/>
        <end position="117"/>
    </location>
</feature>
<feature type="repeat" description="2-5">
    <location>
        <begin position="126"/>
        <end position="128"/>
    </location>
</feature>
<feature type="repeat" description="2-6">
    <location>
        <begin position="129"/>
        <end position="131"/>
    </location>
</feature>
<feature type="repeat" description="1-6">
    <location>
        <begin position="164"/>
        <end position="169"/>
    </location>
</feature>
<feature type="repeat" description="1-7">
    <location>
        <begin position="171"/>
        <end position="176"/>
    </location>
</feature>
<feature type="repeat" description="2-7">
    <location>
        <begin position="178"/>
        <end position="180"/>
    </location>
</feature>
<feature type="repeat" description="2-8">
    <location>
        <begin position="181"/>
        <end position="183"/>
    </location>
</feature>
<feature type="repeat" description="2-9">
    <location>
        <begin position="184"/>
        <end position="186"/>
    </location>
</feature>
<feature type="repeat" description="2-10">
    <location>
        <begin position="187"/>
        <end position="189"/>
    </location>
</feature>
<feature type="repeat" description="2-11">
    <location>
        <begin position="190"/>
        <end position="192"/>
    </location>
</feature>
<feature type="region of interest" description="7 X 6 AA repeats of Y-N-H-G-G-G">
    <location>
        <begin position="54"/>
        <end position="176"/>
    </location>
</feature>
<feature type="region of interest" description="11 X 3 AA repeats of H-G-G">
    <location>
        <begin position="98"/>
        <end position="192"/>
    </location>
</feature>
<feature type="region of interest" description="Disordered" evidence="1">
    <location>
        <begin position="169"/>
        <end position="204"/>
    </location>
</feature>
<feature type="compositionally biased region" description="Gly residues" evidence="1">
    <location>
        <begin position="169"/>
        <end position="194"/>
    </location>
</feature>
<comment type="function">
    <text>May be involved in resistance of the plant to environmental stress.</text>
</comment>
<comment type="induction">
    <text>By cold stress, abscisic acid (ABA) and water stress.</text>
</comment>
<comment type="similarity">
    <text evidence="2">Belongs to the GRP family.</text>
</comment>
<name>CORA_MEDSA</name>
<organism>
    <name type="scientific">Medicago sativa</name>
    <name type="common">Alfalfa</name>
    <dbReference type="NCBI Taxonomy" id="3879"/>
    <lineage>
        <taxon>Eukaryota</taxon>
        <taxon>Viridiplantae</taxon>
        <taxon>Streptophyta</taxon>
        <taxon>Embryophyta</taxon>
        <taxon>Tracheophyta</taxon>
        <taxon>Spermatophyta</taxon>
        <taxon>Magnoliopsida</taxon>
        <taxon>eudicotyledons</taxon>
        <taxon>Gunneridae</taxon>
        <taxon>Pentapetalae</taxon>
        <taxon>rosids</taxon>
        <taxon>fabids</taxon>
        <taxon>Fabales</taxon>
        <taxon>Fabaceae</taxon>
        <taxon>Papilionoideae</taxon>
        <taxon>50 kb inversion clade</taxon>
        <taxon>NPAAA clade</taxon>
        <taxon>Hologalegina</taxon>
        <taxon>IRL clade</taxon>
        <taxon>Trifolieae</taxon>
        <taxon>Medicago</taxon>
    </lineage>
</organism>
<evidence type="ECO:0000256" key="1">
    <source>
        <dbReference type="SAM" id="MobiDB-lite"/>
    </source>
</evidence>
<evidence type="ECO:0000305" key="2"/>
<protein>
    <recommendedName>
        <fullName>Cold and drought-regulated protein CORA</fullName>
    </recommendedName>
</protein>